<organism>
    <name type="scientific">Aliivibrio salmonicida (strain LFI1238)</name>
    <name type="common">Vibrio salmonicida (strain LFI1238)</name>
    <dbReference type="NCBI Taxonomy" id="316275"/>
    <lineage>
        <taxon>Bacteria</taxon>
        <taxon>Pseudomonadati</taxon>
        <taxon>Pseudomonadota</taxon>
        <taxon>Gammaproteobacteria</taxon>
        <taxon>Vibrionales</taxon>
        <taxon>Vibrionaceae</taxon>
        <taxon>Aliivibrio</taxon>
    </lineage>
</organism>
<proteinExistence type="inferred from homology"/>
<feature type="chain" id="PRO_1000092168" description="Phosphoadenosine 5'-phosphosulfate reductase">
    <location>
        <begin position="1"/>
        <end position="253"/>
    </location>
</feature>
<feature type="active site" description="Nucleophile; cysteine thiosulfonate intermediate" evidence="1">
    <location>
        <position position="239"/>
    </location>
</feature>
<evidence type="ECO:0000255" key="1">
    <source>
        <dbReference type="HAMAP-Rule" id="MF_00063"/>
    </source>
</evidence>
<reference key="1">
    <citation type="journal article" date="2008" name="BMC Genomics">
        <title>The genome sequence of the fish pathogen Aliivibrio salmonicida strain LFI1238 shows extensive evidence of gene decay.</title>
        <authorList>
            <person name="Hjerde E."/>
            <person name="Lorentzen M.S."/>
            <person name="Holden M.T."/>
            <person name="Seeger K."/>
            <person name="Paulsen S."/>
            <person name="Bason N."/>
            <person name="Churcher C."/>
            <person name="Harris D."/>
            <person name="Norbertczak H."/>
            <person name="Quail M.A."/>
            <person name="Sanders S."/>
            <person name="Thurston S."/>
            <person name="Parkhill J."/>
            <person name="Willassen N.P."/>
            <person name="Thomson N.R."/>
        </authorList>
    </citation>
    <scope>NUCLEOTIDE SEQUENCE [LARGE SCALE GENOMIC DNA]</scope>
    <source>
        <strain>LFI1238</strain>
    </source>
</reference>
<sequence>MPKLQLSELLSLNKVEQILRLAEINTELEQLTAQERVSWALDNLEGKPAVSSSFGIQAAVMLQLVTDVKSDTPVILTDTGYLFPETYQFIDTLTERLNLNLQVFTADETPMWQEARYGKLWEQGVDGLKHYNRLNKVQPMRRALDQLQVGVWFSGLRRDQSSSRSHLPILSIQNGVFKFLPVIDWSNQEVHYYLEEKGLPYHPLRDEGYLSVGDTHTTQKWEPGMKEEDTRFFGLKRECGLHEDDAEAEGSGI</sequence>
<gene>
    <name evidence="1" type="primary">cysH</name>
    <name type="ordered locus">VSAL_I0404</name>
</gene>
<comment type="function">
    <text evidence="1">Catalyzes the formation of sulfite from phosphoadenosine 5'-phosphosulfate (PAPS) using thioredoxin as an electron donor.</text>
</comment>
<comment type="catalytic activity">
    <reaction evidence="1">
        <text>[thioredoxin]-disulfide + sulfite + adenosine 3',5'-bisphosphate + 2 H(+) = [thioredoxin]-dithiol + 3'-phosphoadenylyl sulfate</text>
        <dbReference type="Rhea" id="RHEA:11724"/>
        <dbReference type="Rhea" id="RHEA-COMP:10698"/>
        <dbReference type="Rhea" id="RHEA-COMP:10700"/>
        <dbReference type="ChEBI" id="CHEBI:15378"/>
        <dbReference type="ChEBI" id="CHEBI:17359"/>
        <dbReference type="ChEBI" id="CHEBI:29950"/>
        <dbReference type="ChEBI" id="CHEBI:50058"/>
        <dbReference type="ChEBI" id="CHEBI:58339"/>
        <dbReference type="ChEBI" id="CHEBI:58343"/>
        <dbReference type="EC" id="1.8.4.8"/>
    </reaction>
</comment>
<comment type="pathway">
    <text evidence="1">Sulfur metabolism; hydrogen sulfide biosynthesis; sulfite from sulfate: step 3/3.</text>
</comment>
<comment type="subcellular location">
    <subcellularLocation>
        <location evidence="1">Cytoplasm</location>
    </subcellularLocation>
</comment>
<comment type="similarity">
    <text evidence="1">Belongs to the PAPS reductase family. CysH subfamily.</text>
</comment>
<protein>
    <recommendedName>
        <fullName evidence="1">Phosphoadenosine 5'-phosphosulfate reductase</fullName>
        <shortName evidence="1">PAPS reductase</shortName>
        <ecNumber evidence="1">1.8.4.8</ecNumber>
    </recommendedName>
    <alternativeName>
        <fullName evidence="1">3'-phosphoadenylylsulfate reductase</fullName>
    </alternativeName>
    <alternativeName>
        <fullName evidence="1">PAPS reductase, thioredoxin dependent</fullName>
    </alternativeName>
    <alternativeName>
        <fullName evidence="1">PAPS sulfotransferase</fullName>
    </alternativeName>
    <alternativeName>
        <fullName evidence="1">PAdoPS reductase</fullName>
    </alternativeName>
</protein>
<keyword id="KW-0963">Cytoplasm</keyword>
<keyword id="KW-0560">Oxidoreductase</keyword>
<name>CYSH_ALISL</name>
<accession>B6ELM6</accession>
<dbReference type="EC" id="1.8.4.8" evidence="1"/>
<dbReference type="EMBL" id="FM178379">
    <property type="protein sequence ID" value="CAQ78089.1"/>
    <property type="molecule type" value="Genomic_DNA"/>
</dbReference>
<dbReference type="RefSeq" id="WP_012549229.1">
    <property type="nucleotide sequence ID" value="NC_011312.1"/>
</dbReference>
<dbReference type="SMR" id="B6ELM6"/>
<dbReference type="KEGG" id="vsa:VSAL_I0404"/>
<dbReference type="eggNOG" id="COG0175">
    <property type="taxonomic scope" value="Bacteria"/>
</dbReference>
<dbReference type="HOGENOM" id="CLU_044089_3_0_6"/>
<dbReference type="UniPathway" id="UPA00140">
    <property type="reaction ID" value="UER00206"/>
</dbReference>
<dbReference type="Proteomes" id="UP000001730">
    <property type="component" value="Chromosome 1"/>
</dbReference>
<dbReference type="GO" id="GO:0005737">
    <property type="term" value="C:cytoplasm"/>
    <property type="evidence" value="ECO:0007669"/>
    <property type="project" value="UniProtKB-SubCell"/>
</dbReference>
<dbReference type="GO" id="GO:0004604">
    <property type="term" value="F:phosphoadenylyl-sulfate reductase (thioredoxin) activity"/>
    <property type="evidence" value="ECO:0007669"/>
    <property type="project" value="UniProtKB-UniRule"/>
</dbReference>
<dbReference type="GO" id="GO:0070814">
    <property type="term" value="P:hydrogen sulfide biosynthetic process"/>
    <property type="evidence" value="ECO:0007669"/>
    <property type="project" value="UniProtKB-UniRule"/>
</dbReference>
<dbReference type="GO" id="GO:0019379">
    <property type="term" value="P:sulfate assimilation, phosphoadenylyl sulfate reduction by phosphoadenylyl-sulfate reductase (thioredoxin)"/>
    <property type="evidence" value="ECO:0007669"/>
    <property type="project" value="UniProtKB-UniRule"/>
</dbReference>
<dbReference type="CDD" id="cd23945">
    <property type="entry name" value="PAPS_reductase"/>
    <property type="match status" value="1"/>
</dbReference>
<dbReference type="FunFam" id="3.40.50.620:FF:000043">
    <property type="entry name" value="Phosphoadenosine phosphosulfate reductase"/>
    <property type="match status" value="1"/>
</dbReference>
<dbReference type="Gene3D" id="3.40.50.620">
    <property type="entry name" value="HUPs"/>
    <property type="match status" value="1"/>
</dbReference>
<dbReference type="HAMAP" id="MF_00063">
    <property type="entry name" value="CysH"/>
    <property type="match status" value="1"/>
</dbReference>
<dbReference type="InterPro" id="IPR004511">
    <property type="entry name" value="PAPS/APS_Rdtase"/>
</dbReference>
<dbReference type="InterPro" id="IPR002500">
    <property type="entry name" value="PAPS_reduct_dom"/>
</dbReference>
<dbReference type="InterPro" id="IPR011800">
    <property type="entry name" value="PAPS_reductase_CysH"/>
</dbReference>
<dbReference type="InterPro" id="IPR014729">
    <property type="entry name" value="Rossmann-like_a/b/a_fold"/>
</dbReference>
<dbReference type="NCBIfam" id="TIGR00434">
    <property type="entry name" value="cysH"/>
    <property type="match status" value="1"/>
</dbReference>
<dbReference type="NCBIfam" id="TIGR02057">
    <property type="entry name" value="PAPS_reductase"/>
    <property type="match status" value="1"/>
</dbReference>
<dbReference type="NCBIfam" id="NF002537">
    <property type="entry name" value="PRK02090.1"/>
    <property type="match status" value="1"/>
</dbReference>
<dbReference type="PANTHER" id="PTHR46509">
    <property type="entry name" value="PHOSPHOADENOSINE PHOSPHOSULFATE REDUCTASE"/>
    <property type="match status" value="1"/>
</dbReference>
<dbReference type="PANTHER" id="PTHR46509:SF1">
    <property type="entry name" value="PHOSPHOADENOSINE PHOSPHOSULFATE REDUCTASE"/>
    <property type="match status" value="1"/>
</dbReference>
<dbReference type="Pfam" id="PF01507">
    <property type="entry name" value="PAPS_reduct"/>
    <property type="match status" value="1"/>
</dbReference>
<dbReference type="PIRSF" id="PIRSF000857">
    <property type="entry name" value="PAPS_reductase"/>
    <property type="match status" value="1"/>
</dbReference>
<dbReference type="SUPFAM" id="SSF52402">
    <property type="entry name" value="Adenine nucleotide alpha hydrolases-like"/>
    <property type="match status" value="1"/>
</dbReference>